<protein>
    <recommendedName>
        <fullName evidence="1">Alanine--tRNA ligase</fullName>
        <ecNumber evidence="1">6.1.1.7</ecNumber>
    </recommendedName>
    <alternativeName>
        <fullName evidence="1">Alanyl-tRNA synthetase</fullName>
        <shortName evidence="1">AlaRS</shortName>
    </alternativeName>
</protein>
<name>SYA_STAAE</name>
<sequence length="876" mass="98520">MKKLKASEIRQKYLDFFVEKGHMVEPSAPLVPIDDDTLLWINSGVATLKKYFDGRETPKKPRIVNSQKAIRTNDIENVGFTARHHTFFEMLGNFSIGDYFKQEAIEFAWEFLTSDKWMGMEPDKLYVTIHPEDMEAYNIWHKDIGLEESRIIRIEGNFWDIGEGPSGPNTEIFYDRGEAYGQDDPAEEMYPGGENERYLEVWNLVFSEFNHNKDHSYTPLPNKNIDTGMGLERMASVSQNVRTNYETDLFMPIMNEIEKVSGKQYLVNNEQDVAFKVIADHIRTIAFAISDGALPANEGRGYVLRRLLRRAVRFSQTLGINEPFMYKLVDIVADIMEPYYPNVKEKADFIKRVIKSEEERFHETLEDGLAILNELIKKAKATTNEINGKDAFKLYDTYGFPIELTEEIAVQAGLKVDMTTFESEMQQQRDRARQARQNSQSMQVQSEVLKNITSASTFVGYDTATAQTTLTHLIYNGEEVSQVEAGETVYFMLTETPFYAISGGQVADTGIVYNDNFEIAVSEVTKAPNGQNLHKGVVQFGQVNVGATVSAEVNQNDRRDIQKNHSATHLLHAALKSVLGDHVNQAGSLVEADRLRFDFSHFGPMTNDEIDQVERLVNEEIWKGIDVNIQEMDIASAKEMGAMALFGEKYGDVVRVVNMAPFSIELCGGIHVRNTSEIGLFKIVSESGTGAGVRRIEALTGKAAFLYLEDIQEKFNTMKSQLKVKSDDQVVDKLTQLQDEEKALLKQLEQRDKEITSLKMGNIEDQVEEINGYKVLVTEVDVPNAKAIRSTMDDFKSKLQDTIIILASNVDDKVSMVATVPKSLTNNVKAGDLIKQMAPIVGGKGGGRPDMAQGGGTQPENISKSLSFIKDYIKNL</sequence>
<accession>A6QHF9</accession>
<organism>
    <name type="scientific">Staphylococcus aureus (strain Newman)</name>
    <dbReference type="NCBI Taxonomy" id="426430"/>
    <lineage>
        <taxon>Bacteria</taxon>
        <taxon>Bacillati</taxon>
        <taxon>Bacillota</taxon>
        <taxon>Bacilli</taxon>
        <taxon>Bacillales</taxon>
        <taxon>Staphylococcaceae</taxon>
        <taxon>Staphylococcus</taxon>
    </lineage>
</organism>
<dbReference type="EC" id="6.1.1.7" evidence="1"/>
<dbReference type="EMBL" id="AP009351">
    <property type="protein sequence ID" value="BAF67791.1"/>
    <property type="molecule type" value="Genomic_DNA"/>
</dbReference>
<dbReference type="RefSeq" id="WP_000734064.1">
    <property type="nucleotide sequence ID" value="NZ_JBBIAE010000001.1"/>
</dbReference>
<dbReference type="SMR" id="A6QHF9"/>
<dbReference type="KEGG" id="sae:NWMN_1519"/>
<dbReference type="HOGENOM" id="CLU_004485_1_1_9"/>
<dbReference type="Proteomes" id="UP000006386">
    <property type="component" value="Chromosome"/>
</dbReference>
<dbReference type="GO" id="GO:0005829">
    <property type="term" value="C:cytosol"/>
    <property type="evidence" value="ECO:0007669"/>
    <property type="project" value="TreeGrafter"/>
</dbReference>
<dbReference type="GO" id="GO:0004813">
    <property type="term" value="F:alanine-tRNA ligase activity"/>
    <property type="evidence" value="ECO:0007669"/>
    <property type="project" value="UniProtKB-UniRule"/>
</dbReference>
<dbReference type="GO" id="GO:0002161">
    <property type="term" value="F:aminoacyl-tRNA deacylase activity"/>
    <property type="evidence" value="ECO:0007669"/>
    <property type="project" value="TreeGrafter"/>
</dbReference>
<dbReference type="GO" id="GO:0005524">
    <property type="term" value="F:ATP binding"/>
    <property type="evidence" value="ECO:0007669"/>
    <property type="project" value="UniProtKB-UniRule"/>
</dbReference>
<dbReference type="GO" id="GO:0140096">
    <property type="term" value="F:catalytic activity, acting on a protein"/>
    <property type="evidence" value="ECO:0007669"/>
    <property type="project" value="UniProtKB-ARBA"/>
</dbReference>
<dbReference type="GO" id="GO:0016740">
    <property type="term" value="F:transferase activity"/>
    <property type="evidence" value="ECO:0007669"/>
    <property type="project" value="UniProtKB-ARBA"/>
</dbReference>
<dbReference type="GO" id="GO:0000049">
    <property type="term" value="F:tRNA binding"/>
    <property type="evidence" value="ECO:0007669"/>
    <property type="project" value="UniProtKB-KW"/>
</dbReference>
<dbReference type="GO" id="GO:0008270">
    <property type="term" value="F:zinc ion binding"/>
    <property type="evidence" value="ECO:0007669"/>
    <property type="project" value="UniProtKB-UniRule"/>
</dbReference>
<dbReference type="GO" id="GO:0006419">
    <property type="term" value="P:alanyl-tRNA aminoacylation"/>
    <property type="evidence" value="ECO:0007669"/>
    <property type="project" value="UniProtKB-UniRule"/>
</dbReference>
<dbReference type="CDD" id="cd00673">
    <property type="entry name" value="AlaRS_core"/>
    <property type="match status" value="1"/>
</dbReference>
<dbReference type="FunFam" id="2.40.30.130:FF:000001">
    <property type="entry name" value="Alanine--tRNA ligase"/>
    <property type="match status" value="1"/>
</dbReference>
<dbReference type="FunFam" id="3.10.310.40:FF:000001">
    <property type="entry name" value="Alanine--tRNA ligase"/>
    <property type="match status" value="1"/>
</dbReference>
<dbReference type="FunFam" id="3.30.54.20:FF:000001">
    <property type="entry name" value="Alanine--tRNA ligase"/>
    <property type="match status" value="1"/>
</dbReference>
<dbReference type="FunFam" id="3.30.930.10:FF:000046">
    <property type="entry name" value="Alanine--tRNA ligase"/>
    <property type="match status" value="1"/>
</dbReference>
<dbReference type="FunFam" id="3.30.980.10:FF:000004">
    <property type="entry name" value="Alanine--tRNA ligase, cytoplasmic"/>
    <property type="match status" value="1"/>
</dbReference>
<dbReference type="Gene3D" id="2.40.30.130">
    <property type="match status" value="1"/>
</dbReference>
<dbReference type="Gene3D" id="3.10.310.40">
    <property type="match status" value="1"/>
</dbReference>
<dbReference type="Gene3D" id="3.30.54.20">
    <property type="match status" value="1"/>
</dbReference>
<dbReference type="Gene3D" id="3.30.930.10">
    <property type="entry name" value="Bira Bifunctional Protein, Domain 2"/>
    <property type="match status" value="1"/>
</dbReference>
<dbReference type="Gene3D" id="3.30.980.10">
    <property type="entry name" value="Threonyl-trna Synthetase, Chain A, domain 2"/>
    <property type="match status" value="1"/>
</dbReference>
<dbReference type="HAMAP" id="MF_00036_B">
    <property type="entry name" value="Ala_tRNA_synth_B"/>
    <property type="match status" value="1"/>
</dbReference>
<dbReference type="InterPro" id="IPR045864">
    <property type="entry name" value="aa-tRNA-synth_II/BPL/LPL"/>
</dbReference>
<dbReference type="InterPro" id="IPR002318">
    <property type="entry name" value="Ala-tRNA-lgiase_IIc"/>
</dbReference>
<dbReference type="InterPro" id="IPR018162">
    <property type="entry name" value="Ala-tRNA-ligase_IIc_anticod-bd"/>
</dbReference>
<dbReference type="InterPro" id="IPR018165">
    <property type="entry name" value="Ala-tRNA-synth_IIc_core"/>
</dbReference>
<dbReference type="InterPro" id="IPR018164">
    <property type="entry name" value="Ala-tRNA-synth_IIc_N"/>
</dbReference>
<dbReference type="InterPro" id="IPR050058">
    <property type="entry name" value="Ala-tRNA_ligase"/>
</dbReference>
<dbReference type="InterPro" id="IPR023033">
    <property type="entry name" value="Ala_tRNA_ligase_euk/bac"/>
</dbReference>
<dbReference type="InterPro" id="IPR003156">
    <property type="entry name" value="DHHA1_dom"/>
</dbReference>
<dbReference type="InterPro" id="IPR018163">
    <property type="entry name" value="Thr/Ala-tRNA-synth_IIc_edit"/>
</dbReference>
<dbReference type="InterPro" id="IPR009000">
    <property type="entry name" value="Transl_B-barrel_sf"/>
</dbReference>
<dbReference type="InterPro" id="IPR012947">
    <property type="entry name" value="tRNA_SAD"/>
</dbReference>
<dbReference type="NCBIfam" id="TIGR00344">
    <property type="entry name" value="alaS"/>
    <property type="match status" value="1"/>
</dbReference>
<dbReference type="PANTHER" id="PTHR11777:SF9">
    <property type="entry name" value="ALANINE--TRNA LIGASE, CYTOPLASMIC"/>
    <property type="match status" value="1"/>
</dbReference>
<dbReference type="PANTHER" id="PTHR11777">
    <property type="entry name" value="ALANYL-TRNA SYNTHETASE"/>
    <property type="match status" value="1"/>
</dbReference>
<dbReference type="Pfam" id="PF02272">
    <property type="entry name" value="DHHA1"/>
    <property type="match status" value="1"/>
</dbReference>
<dbReference type="Pfam" id="PF01411">
    <property type="entry name" value="tRNA-synt_2c"/>
    <property type="match status" value="1"/>
</dbReference>
<dbReference type="Pfam" id="PF07973">
    <property type="entry name" value="tRNA_SAD"/>
    <property type="match status" value="1"/>
</dbReference>
<dbReference type="PRINTS" id="PR00980">
    <property type="entry name" value="TRNASYNTHALA"/>
</dbReference>
<dbReference type="SMART" id="SM00863">
    <property type="entry name" value="tRNA_SAD"/>
    <property type="match status" value="1"/>
</dbReference>
<dbReference type="SUPFAM" id="SSF55681">
    <property type="entry name" value="Class II aaRS and biotin synthetases"/>
    <property type="match status" value="1"/>
</dbReference>
<dbReference type="SUPFAM" id="SSF101353">
    <property type="entry name" value="Putative anticodon-binding domain of alanyl-tRNA synthetase (AlaRS)"/>
    <property type="match status" value="1"/>
</dbReference>
<dbReference type="SUPFAM" id="SSF55186">
    <property type="entry name" value="ThrRS/AlaRS common domain"/>
    <property type="match status" value="1"/>
</dbReference>
<dbReference type="SUPFAM" id="SSF50447">
    <property type="entry name" value="Translation proteins"/>
    <property type="match status" value="1"/>
</dbReference>
<dbReference type="PROSITE" id="PS50860">
    <property type="entry name" value="AA_TRNA_LIGASE_II_ALA"/>
    <property type="match status" value="1"/>
</dbReference>
<comment type="function">
    <text evidence="1">Catalyzes the attachment of alanine to tRNA(Ala) in a two-step reaction: alanine is first activated by ATP to form Ala-AMP and then transferred to the acceptor end of tRNA(Ala). Also edits incorrectly charged Ser-tRNA(Ala) and Gly-tRNA(Ala) via its editing domain.</text>
</comment>
<comment type="catalytic activity">
    <reaction evidence="1">
        <text>tRNA(Ala) + L-alanine + ATP = L-alanyl-tRNA(Ala) + AMP + diphosphate</text>
        <dbReference type="Rhea" id="RHEA:12540"/>
        <dbReference type="Rhea" id="RHEA-COMP:9657"/>
        <dbReference type="Rhea" id="RHEA-COMP:9923"/>
        <dbReference type="ChEBI" id="CHEBI:30616"/>
        <dbReference type="ChEBI" id="CHEBI:33019"/>
        <dbReference type="ChEBI" id="CHEBI:57972"/>
        <dbReference type="ChEBI" id="CHEBI:78442"/>
        <dbReference type="ChEBI" id="CHEBI:78497"/>
        <dbReference type="ChEBI" id="CHEBI:456215"/>
        <dbReference type="EC" id="6.1.1.7"/>
    </reaction>
</comment>
<comment type="cofactor">
    <cofactor evidence="1">
        <name>Zn(2+)</name>
        <dbReference type="ChEBI" id="CHEBI:29105"/>
    </cofactor>
    <text evidence="1">Binds 1 zinc ion per subunit.</text>
</comment>
<comment type="subcellular location">
    <subcellularLocation>
        <location evidence="1">Cytoplasm</location>
    </subcellularLocation>
</comment>
<comment type="domain">
    <text evidence="1">Consists of three domains; the N-terminal catalytic domain, the editing domain and the C-terminal C-Ala domain. The editing domain removes incorrectly charged amino acids, while the C-Ala domain, along with tRNA(Ala), serves as a bridge to cooperatively bring together the editing and aminoacylation centers thus stimulating deacylation of misacylated tRNAs.</text>
</comment>
<comment type="similarity">
    <text evidence="1">Belongs to the class-II aminoacyl-tRNA synthetase family.</text>
</comment>
<feature type="chain" id="PRO_0000347813" description="Alanine--tRNA ligase">
    <location>
        <begin position="1"/>
        <end position="876"/>
    </location>
</feature>
<feature type="binding site" evidence="1">
    <location>
        <position position="565"/>
    </location>
    <ligand>
        <name>Zn(2+)</name>
        <dbReference type="ChEBI" id="CHEBI:29105"/>
    </ligand>
</feature>
<feature type="binding site" evidence="1">
    <location>
        <position position="569"/>
    </location>
    <ligand>
        <name>Zn(2+)</name>
        <dbReference type="ChEBI" id="CHEBI:29105"/>
    </ligand>
</feature>
<feature type="binding site" evidence="1">
    <location>
        <position position="667"/>
    </location>
    <ligand>
        <name>Zn(2+)</name>
        <dbReference type="ChEBI" id="CHEBI:29105"/>
    </ligand>
</feature>
<feature type="binding site" evidence="1">
    <location>
        <position position="671"/>
    </location>
    <ligand>
        <name>Zn(2+)</name>
        <dbReference type="ChEBI" id="CHEBI:29105"/>
    </ligand>
</feature>
<gene>
    <name evidence="1" type="primary">alaS</name>
    <name type="ordered locus">NWMN_1519</name>
</gene>
<reference key="1">
    <citation type="journal article" date="2008" name="J. Bacteriol.">
        <title>Genome sequence of Staphylococcus aureus strain Newman and comparative analysis of staphylococcal genomes: polymorphism and evolution of two major pathogenicity islands.</title>
        <authorList>
            <person name="Baba T."/>
            <person name="Bae T."/>
            <person name="Schneewind O."/>
            <person name="Takeuchi F."/>
            <person name="Hiramatsu K."/>
        </authorList>
    </citation>
    <scope>NUCLEOTIDE SEQUENCE [LARGE SCALE GENOMIC DNA]</scope>
    <source>
        <strain>Newman</strain>
    </source>
</reference>
<keyword id="KW-0030">Aminoacyl-tRNA synthetase</keyword>
<keyword id="KW-0067">ATP-binding</keyword>
<keyword id="KW-0963">Cytoplasm</keyword>
<keyword id="KW-0436">Ligase</keyword>
<keyword id="KW-0479">Metal-binding</keyword>
<keyword id="KW-0547">Nucleotide-binding</keyword>
<keyword id="KW-0648">Protein biosynthesis</keyword>
<keyword id="KW-0694">RNA-binding</keyword>
<keyword id="KW-0820">tRNA-binding</keyword>
<keyword id="KW-0862">Zinc</keyword>
<proteinExistence type="inferred from homology"/>
<evidence type="ECO:0000255" key="1">
    <source>
        <dbReference type="HAMAP-Rule" id="MF_00036"/>
    </source>
</evidence>